<gene>
    <name evidence="1" type="primary">tig</name>
    <name type="ordered locus">RPD_2895</name>
</gene>
<organism>
    <name type="scientific">Rhodopseudomonas palustris (strain BisB5)</name>
    <dbReference type="NCBI Taxonomy" id="316057"/>
    <lineage>
        <taxon>Bacteria</taxon>
        <taxon>Pseudomonadati</taxon>
        <taxon>Pseudomonadota</taxon>
        <taxon>Alphaproteobacteria</taxon>
        <taxon>Hyphomicrobiales</taxon>
        <taxon>Nitrobacteraceae</taxon>
        <taxon>Rhodopseudomonas</taxon>
    </lineage>
</organism>
<proteinExistence type="inferred from homology"/>
<protein>
    <recommendedName>
        <fullName evidence="1">Trigger factor</fullName>
        <shortName evidence="1">TF</shortName>
        <ecNumber evidence="1">5.2.1.8</ecNumber>
    </recommendedName>
    <alternativeName>
        <fullName evidence="1">PPIase</fullName>
    </alternativeName>
</protein>
<keyword id="KW-0131">Cell cycle</keyword>
<keyword id="KW-0132">Cell division</keyword>
<keyword id="KW-0143">Chaperone</keyword>
<keyword id="KW-0963">Cytoplasm</keyword>
<keyword id="KW-0413">Isomerase</keyword>
<keyword id="KW-0697">Rotamase</keyword>
<name>TIG_RHOPS</name>
<accession>Q135W6</accession>
<dbReference type="EC" id="5.2.1.8" evidence="1"/>
<dbReference type="EMBL" id="CP000283">
    <property type="protein sequence ID" value="ABE40123.1"/>
    <property type="molecule type" value="Genomic_DNA"/>
</dbReference>
<dbReference type="SMR" id="Q135W6"/>
<dbReference type="STRING" id="316057.RPD_2895"/>
<dbReference type="KEGG" id="rpd:RPD_2895"/>
<dbReference type="eggNOG" id="COG0544">
    <property type="taxonomic scope" value="Bacteria"/>
</dbReference>
<dbReference type="HOGENOM" id="CLU_033058_2_2_5"/>
<dbReference type="BioCyc" id="RPAL316057:RPD_RS14555-MONOMER"/>
<dbReference type="Proteomes" id="UP000001818">
    <property type="component" value="Chromosome"/>
</dbReference>
<dbReference type="GO" id="GO:0005737">
    <property type="term" value="C:cytoplasm"/>
    <property type="evidence" value="ECO:0007669"/>
    <property type="project" value="UniProtKB-SubCell"/>
</dbReference>
<dbReference type="GO" id="GO:0003755">
    <property type="term" value="F:peptidyl-prolyl cis-trans isomerase activity"/>
    <property type="evidence" value="ECO:0007669"/>
    <property type="project" value="UniProtKB-UniRule"/>
</dbReference>
<dbReference type="GO" id="GO:0044183">
    <property type="term" value="F:protein folding chaperone"/>
    <property type="evidence" value="ECO:0007669"/>
    <property type="project" value="TreeGrafter"/>
</dbReference>
<dbReference type="GO" id="GO:0043022">
    <property type="term" value="F:ribosome binding"/>
    <property type="evidence" value="ECO:0007669"/>
    <property type="project" value="TreeGrafter"/>
</dbReference>
<dbReference type="GO" id="GO:0051083">
    <property type="term" value="P:'de novo' cotranslational protein folding"/>
    <property type="evidence" value="ECO:0007669"/>
    <property type="project" value="TreeGrafter"/>
</dbReference>
<dbReference type="GO" id="GO:0051301">
    <property type="term" value="P:cell division"/>
    <property type="evidence" value="ECO:0007669"/>
    <property type="project" value="UniProtKB-KW"/>
</dbReference>
<dbReference type="GO" id="GO:0061077">
    <property type="term" value="P:chaperone-mediated protein folding"/>
    <property type="evidence" value="ECO:0007669"/>
    <property type="project" value="TreeGrafter"/>
</dbReference>
<dbReference type="GO" id="GO:0015031">
    <property type="term" value="P:protein transport"/>
    <property type="evidence" value="ECO:0007669"/>
    <property type="project" value="UniProtKB-UniRule"/>
</dbReference>
<dbReference type="GO" id="GO:0043335">
    <property type="term" value="P:protein unfolding"/>
    <property type="evidence" value="ECO:0007669"/>
    <property type="project" value="TreeGrafter"/>
</dbReference>
<dbReference type="FunFam" id="3.10.50.40:FF:000001">
    <property type="entry name" value="Trigger factor"/>
    <property type="match status" value="1"/>
</dbReference>
<dbReference type="Gene3D" id="3.10.50.40">
    <property type="match status" value="1"/>
</dbReference>
<dbReference type="Gene3D" id="3.30.70.1050">
    <property type="entry name" value="Trigger factor ribosome-binding domain"/>
    <property type="match status" value="1"/>
</dbReference>
<dbReference type="Gene3D" id="1.10.3120.10">
    <property type="entry name" value="Trigger factor, C-terminal domain"/>
    <property type="match status" value="1"/>
</dbReference>
<dbReference type="HAMAP" id="MF_00303">
    <property type="entry name" value="Trigger_factor_Tig"/>
    <property type="match status" value="1"/>
</dbReference>
<dbReference type="InterPro" id="IPR046357">
    <property type="entry name" value="PPIase_dom_sf"/>
</dbReference>
<dbReference type="InterPro" id="IPR001179">
    <property type="entry name" value="PPIase_FKBP_dom"/>
</dbReference>
<dbReference type="InterPro" id="IPR005215">
    <property type="entry name" value="Trig_fac"/>
</dbReference>
<dbReference type="InterPro" id="IPR008880">
    <property type="entry name" value="Trigger_fac_C"/>
</dbReference>
<dbReference type="InterPro" id="IPR037041">
    <property type="entry name" value="Trigger_fac_C_sf"/>
</dbReference>
<dbReference type="InterPro" id="IPR008881">
    <property type="entry name" value="Trigger_fac_ribosome-bd_bac"/>
</dbReference>
<dbReference type="InterPro" id="IPR036611">
    <property type="entry name" value="Trigger_fac_ribosome-bd_sf"/>
</dbReference>
<dbReference type="InterPro" id="IPR027304">
    <property type="entry name" value="Trigger_fact/SurA_dom_sf"/>
</dbReference>
<dbReference type="NCBIfam" id="TIGR00115">
    <property type="entry name" value="tig"/>
    <property type="match status" value="1"/>
</dbReference>
<dbReference type="PANTHER" id="PTHR30560">
    <property type="entry name" value="TRIGGER FACTOR CHAPERONE AND PEPTIDYL-PROLYL CIS/TRANS ISOMERASE"/>
    <property type="match status" value="1"/>
</dbReference>
<dbReference type="PANTHER" id="PTHR30560:SF3">
    <property type="entry name" value="TRIGGER FACTOR-LIKE PROTEIN TIG, CHLOROPLASTIC"/>
    <property type="match status" value="1"/>
</dbReference>
<dbReference type="Pfam" id="PF00254">
    <property type="entry name" value="FKBP_C"/>
    <property type="match status" value="1"/>
</dbReference>
<dbReference type="Pfam" id="PF05698">
    <property type="entry name" value="Trigger_C"/>
    <property type="match status" value="1"/>
</dbReference>
<dbReference type="Pfam" id="PF05697">
    <property type="entry name" value="Trigger_N"/>
    <property type="match status" value="1"/>
</dbReference>
<dbReference type="PIRSF" id="PIRSF003095">
    <property type="entry name" value="Trigger_factor"/>
    <property type="match status" value="1"/>
</dbReference>
<dbReference type="SUPFAM" id="SSF54534">
    <property type="entry name" value="FKBP-like"/>
    <property type="match status" value="1"/>
</dbReference>
<dbReference type="SUPFAM" id="SSF109998">
    <property type="entry name" value="Triger factor/SurA peptide-binding domain-like"/>
    <property type="match status" value="1"/>
</dbReference>
<dbReference type="SUPFAM" id="SSF102735">
    <property type="entry name" value="Trigger factor ribosome-binding domain"/>
    <property type="match status" value="1"/>
</dbReference>
<dbReference type="PROSITE" id="PS50059">
    <property type="entry name" value="FKBP_PPIASE"/>
    <property type="match status" value="1"/>
</dbReference>
<sequence>MQVKETVADGLKREFEVNVPAADIDAQVDARLVDLKDKVKLNGFRPGKVPVSHLKRVYGRSVAAETIDKLVRETNDGIFAERGFRLATEPKITMPQDQKVVEDILAGKSDLNYTVAIEVVPTIELADFKSFSVEKPVVDVGDSDVDEAIKRIAEANRAYADKAEGAKAETGDRVTVSFKGTIDGVAFDGGTGEDIPVVIGSGSFIPGFEDQLAGIGVGETRTIKVSFPANYASDTLAGKPAEFETTATKVEAPQDVTIDDEFAKTLGMESLDKLKEAARARLGAEYAGATRLRVKRQLLDRLDETHKFDAPPSLVEQEFEVMWRSINAEMQQNGKSFADEDTTEEAAREEYRKIADRRVRLGLVLSEIGEKNKIQVTDDEVSRAVIERARQMPGREKEVWDFYRSNNEALAQLRAPIYEDKVVDYILELANVTEKKVTREELYKDDDADKTAA</sequence>
<evidence type="ECO:0000255" key="1">
    <source>
        <dbReference type="HAMAP-Rule" id="MF_00303"/>
    </source>
</evidence>
<feature type="chain" id="PRO_1000022741" description="Trigger factor">
    <location>
        <begin position="1"/>
        <end position="453"/>
    </location>
</feature>
<feature type="domain" description="PPIase FKBP-type" evidence="1">
    <location>
        <begin position="171"/>
        <end position="256"/>
    </location>
</feature>
<reference key="1">
    <citation type="submission" date="2006-03" db="EMBL/GenBank/DDBJ databases">
        <title>Complete sequence of Rhodopseudomonas palustris BisB5.</title>
        <authorList>
            <consortium name="US DOE Joint Genome Institute"/>
            <person name="Copeland A."/>
            <person name="Lucas S."/>
            <person name="Lapidus A."/>
            <person name="Barry K."/>
            <person name="Detter J.C."/>
            <person name="Glavina del Rio T."/>
            <person name="Hammon N."/>
            <person name="Israni S."/>
            <person name="Dalin E."/>
            <person name="Tice H."/>
            <person name="Pitluck S."/>
            <person name="Chain P."/>
            <person name="Malfatti S."/>
            <person name="Shin M."/>
            <person name="Vergez L."/>
            <person name="Schmutz J."/>
            <person name="Larimer F."/>
            <person name="Land M."/>
            <person name="Hauser L."/>
            <person name="Pelletier D.A."/>
            <person name="Kyrpides N."/>
            <person name="Lykidis A."/>
            <person name="Oda Y."/>
            <person name="Harwood C.S."/>
            <person name="Richardson P."/>
        </authorList>
    </citation>
    <scope>NUCLEOTIDE SEQUENCE [LARGE SCALE GENOMIC DNA]</scope>
    <source>
        <strain>BisB5</strain>
    </source>
</reference>
<comment type="function">
    <text evidence="1">Involved in protein export. Acts as a chaperone by maintaining the newly synthesized protein in an open conformation. Functions as a peptidyl-prolyl cis-trans isomerase.</text>
</comment>
<comment type="catalytic activity">
    <reaction evidence="1">
        <text>[protein]-peptidylproline (omega=180) = [protein]-peptidylproline (omega=0)</text>
        <dbReference type="Rhea" id="RHEA:16237"/>
        <dbReference type="Rhea" id="RHEA-COMP:10747"/>
        <dbReference type="Rhea" id="RHEA-COMP:10748"/>
        <dbReference type="ChEBI" id="CHEBI:83833"/>
        <dbReference type="ChEBI" id="CHEBI:83834"/>
        <dbReference type="EC" id="5.2.1.8"/>
    </reaction>
</comment>
<comment type="subcellular location">
    <subcellularLocation>
        <location>Cytoplasm</location>
    </subcellularLocation>
    <text evidence="1">About half TF is bound to the ribosome near the polypeptide exit tunnel while the other half is free in the cytoplasm.</text>
</comment>
<comment type="domain">
    <text evidence="1">Consists of 3 domains; the N-terminus binds the ribosome, the middle domain has PPIase activity, while the C-terminus has intrinsic chaperone activity on its own.</text>
</comment>
<comment type="similarity">
    <text evidence="1">Belongs to the FKBP-type PPIase family. Tig subfamily.</text>
</comment>